<comment type="function">
    <text>The glycine cleavage system catalyzes the degradation of glycine. The H protein shuttles the methylamine group of glycine from the P protein to the T protein.</text>
</comment>
<comment type="cofactor">
    <cofactor>
        <name>(R)-lipoate</name>
        <dbReference type="ChEBI" id="CHEBI:83088"/>
    </cofactor>
    <text>Binds 1 lipoyl cofactor covalently.</text>
</comment>
<comment type="subunit">
    <text>The glycine cleavage system is composed of four proteins: P, T, L and H.</text>
</comment>
<comment type="subcellular location">
    <subcellularLocation>
        <location>Mitochondrion</location>
    </subcellularLocation>
</comment>
<comment type="similarity">
    <text evidence="3">Belongs to the GcvH family.</text>
</comment>
<dbReference type="EMBL" id="J05164">
    <property type="protein sequence ID" value="AAA33668.1"/>
    <property type="molecule type" value="mRNA"/>
</dbReference>
<dbReference type="EMBL" id="X53656">
    <property type="protein sequence ID" value="CAA37704.1"/>
    <property type="molecule type" value="mRNA"/>
</dbReference>
<dbReference type="EMBL" id="X64726">
    <property type="protein sequence ID" value="CAA45978.1"/>
    <property type="molecule type" value="Genomic_DNA"/>
</dbReference>
<dbReference type="PIR" id="S29122">
    <property type="entry name" value="GCPMH"/>
</dbReference>
<dbReference type="PDB" id="1DXM">
    <property type="method" value="X-ray"/>
    <property type="resolution" value="2.60 A"/>
    <property type="chains" value="A/B=35-165"/>
</dbReference>
<dbReference type="PDB" id="1HPC">
    <property type="method" value="X-ray"/>
    <property type="resolution" value="2.00 A"/>
    <property type="chains" value="A/B=35-165"/>
</dbReference>
<dbReference type="PDB" id="1HTP">
    <property type="method" value="X-ray"/>
    <property type="resolution" value="2.20 A"/>
    <property type="chains" value="A=35-165"/>
</dbReference>
<dbReference type="PDBsum" id="1DXM"/>
<dbReference type="PDBsum" id="1HPC"/>
<dbReference type="PDBsum" id="1HTP"/>
<dbReference type="BMRB" id="P16048"/>
<dbReference type="SMR" id="P16048"/>
<dbReference type="IntAct" id="P16048">
    <property type="interactions" value="1"/>
</dbReference>
<dbReference type="EnsemblPlants" id="Psat2g173640.1">
    <property type="protein sequence ID" value="Psat2g173640.1.cds"/>
    <property type="gene ID" value="Psat2g173640"/>
</dbReference>
<dbReference type="Gramene" id="Psat2g173640.1">
    <property type="protein sequence ID" value="Psat2g173640.1.cds"/>
    <property type="gene ID" value="Psat2g173640"/>
</dbReference>
<dbReference type="OrthoDB" id="10264154at2759"/>
<dbReference type="BRENDA" id="1.4.1.27">
    <property type="organism ID" value="4872"/>
</dbReference>
<dbReference type="SABIO-RK" id="P16048"/>
<dbReference type="EvolutionaryTrace" id="P16048"/>
<dbReference type="GO" id="GO:0005960">
    <property type="term" value="C:glycine cleavage complex"/>
    <property type="evidence" value="ECO:0000314"/>
    <property type="project" value="UniProtKB"/>
</dbReference>
<dbReference type="GO" id="GO:0005759">
    <property type="term" value="C:mitochondrial matrix"/>
    <property type="evidence" value="ECO:0000314"/>
    <property type="project" value="FlyBase"/>
</dbReference>
<dbReference type="GO" id="GO:0019464">
    <property type="term" value="P:glycine decarboxylation via glycine cleavage system"/>
    <property type="evidence" value="ECO:0000314"/>
    <property type="project" value="FlyBase"/>
</dbReference>
<dbReference type="CDD" id="cd06848">
    <property type="entry name" value="GCS_H"/>
    <property type="match status" value="1"/>
</dbReference>
<dbReference type="FunFam" id="2.40.50.100:FF:000011">
    <property type="entry name" value="Glycine cleavage system H protein"/>
    <property type="match status" value="1"/>
</dbReference>
<dbReference type="Gene3D" id="2.40.50.100">
    <property type="match status" value="1"/>
</dbReference>
<dbReference type="HAMAP" id="MF_00272">
    <property type="entry name" value="GcvH"/>
    <property type="match status" value="1"/>
</dbReference>
<dbReference type="InterPro" id="IPR003016">
    <property type="entry name" value="2-oxoA_DH_lipoyl-BS"/>
</dbReference>
<dbReference type="InterPro" id="IPR000089">
    <property type="entry name" value="Biotin_lipoyl"/>
</dbReference>
<dbReference type="InterPro" id="IPR002930">
    <property type="entry name" value="GCV_H"/>
</dbReference>
<dbReference type="InterPro" id="IPR033753">
    <property type="entry name" value="GCV_H/Fam206"/>
</dbReference>
<dbReference type="InterPro" id="IPR017453">
    <property type="entry name" value="GCV_H_sub"/>
</dbReference>
<dbReference type="InterPro" id="IPR011053">
    <property type="entry name" value="Single_hybrid_motif"/>
</dbReference>
<dbReference type="NCBIfam" id="TIGR00527">
    <property type="entry name" value="gcvH"/>
    <property type="match status" value="1"/>
</dbReference>
<dbReference type="NCBIfam" id="NF002270">
    <property type="entry name" value="PRK01202.1"/>
    <property type="match status" value="1"/>
</dbReference>
<dbReference type="PANTHER" id="PTHR11715">
    <property type="entry name" value="GLYCINE CLEAVAGE SYSTEM H PROTEIN"/>
    <property type="match status" value="1"/>
</dbReference>
<dbReference type="PANTHER" id="PTHR11715:SF27">
    <property type="entry name" value="GLYCINE CLEAVAGE SYSTEM H PROTEIN 1, MITOCHONDRIAL-RELATED"/>
    <property type="match status" value="1"/>
</dbReference>
<dbReference type="Pfam" id="PF01597">
    <property type="entry name" value="GCV_H"/>
    <property type="match status" value="1"/>
</dbReference>
<dbReference type="SUPFAM" id="SSF51230">
    <property type="entry name" value="Single hybrid motif"/>
    <property type="match status" value="1"/>
</dbReference>
<dbReference type="PROSITE" id="PS50968">
    <property type="entry name" value="BIOTINYL_LIPOYL"/>
    <property type="match status" value="1"/>
</dbReference>
<dbReference type="PROSITE" id="PS00189">
    <property type="entry name" value="LIPOYL"/>
    <property type="match status" value="1"/>
</dbReference>
<name>GCSH_PEA</name>
<proteinExistence type="evidence at protein level"/>
<feature type="transit peptide" description="Mitochondrion">
    <location>
        <begin position="1"/>
        <end position="34"/>
    </location>
</feature>
<feature type="chain" id="PRO_0000010738" description="Glycine cleavage system H protein, mitochondrial">
    <location>
        <begin position="35"/>
        <end position="165"/>
    </location>
</feature>
<feature type="domain" description="Lipoyl-binding" evidence="1">
    <location>
        <begin position="56"/>
        <end position="138"/>
    </location>
</feature>
<feature type="modified residue" description="N6-lipoyllysine" evidence="1 2">
    <location>
        <position position="97"/>
    </location>
</feature>
<feature type="strand" evidence="4">
    <location>
        <begin position="47"/>
        <end position="53"/>
    </location>
</feature>
<feature type="strand" evidence="4">
    <location>
        <begin position="56"/>
        <end position="61"/>
    </location>
</feature>
<feature type="helix" evidence="4">
    <location>
        <begin position="63"/>
        <end position="69"/>
    </location>
</feature>
<feature type="strand" evidence="4">
    <location>
        <begin position="71"/>
        <end position="76"/>
    </location>
</feature>
<feature type="strand" evidence="4">
    <location>
        <begin position="88"/>
        <end position="97"/>
    </location>
</feature>
<feature type="strand" evidence="4">
    <location>
        <begin position="99"/>
        <end position="106"/>
    </location>
</feature>
<feature type="strand" evidence="4">
    <location>
        <begin position="108"/>
        <end position="113"/>
    </location>
</feature>
<feature type="helix" evidence="4">
    <location>
        <begin position="116"/>
        <end position="119"/>
    </location>
</feature>
<feature type="helix" evidence="4">
    <location>
        <begin position="123"/>
        <end position="126"/>
    </location>
</feature>
<feature type="turn" evidence="4">
    <location>
        <begin position="128"/>
        <end position="132"/>
    </location>
</feature>
<feature type="strand" evidence="4">
    <location>
        <begin position="135"/>
        <end position="141"/>
    </location>
</feature>
<feature type="helix" evidence="4">
    <location>
        <begin position="142"/>
        <end position="147"/>
    </location>
</feature>
<feature type="helix" evidence="4">
    <location>
        <begin position="151"/>
        <end position="163"/>
    </location>
</feature>
<accession>P16048</accession>
<sequence>MALRMWASSTANALKLSSSSRLHLSPTFSISRCFSNVLDGLKYAPSHEWVKHEGSVATIGITDHAQDHLGEVVFVELPEPGVSVTKGKGFGAVESVKATSDVNSPISGEVIEVNTGLTGKPGLINSSPYEDGWMIKIKPTSPDELESLLGAKEYTKFCEEEDAAH</sequence>
<evidence type="ECO:0000255" key="1">
    <source>
        <dbReference type="PROSITE-ProRule" id="PRU01066"/>
    </source>
</evidence>
<evidence type="ECO:0000269" key="2">
    <source>
    </source>
</evidence>
<evidence type="ECO:0000305" key="3"/>
<evidence type="ECO:0007829" key="4">
    <source>
        <dbReference type="PDB" id="1HPC"/>
    </source>
</evidence>
<organism>
    <name type="scientific">Pisum sativum</name>
    <name type="common">Garden pea</name>
    <name type="synonym">Lathyrus oleraceus</name>
    <dbReference type="NCBI Taxonomy" id="3888"/>
    <lineage>
        <taxon>Eukaryota</taxon>
        <taxon>Viridiplantae</taxon>
        <taxon>Streptophyta</taxon>
        <taxon>Embryophyta</taxon>
        <taxon>Tracheophyta</taxon>
        <taxon>Spermatophyta</taxon>
        <taxon>Magnoliopsida</taxon>
        <taxon>eudicotyledons</taxon>
        <taxon>Gunneridae</taxon>
        <taxon>Pentapetalae</taxon>
        <taxon>rosids</taxon>
        <taxon>fabids</taxon>
        <taxon>Fabales</taxon>
        <taxon>Fabaceae</taxon>
        <taxon>Papilionoideae</taxon>
        <taxon>50 kb inversion clade</taxon>
        <taxon>NPAAA clade</taxon>
        <taxon>Hologalegina</taxon>
        <taxon>IRL clade</taxon>
        <taxon>Fabeae</taxon>
        <taxon>Pisum</taxon>
    </lineage>
</organism>
<protein>
    <recommendedName>
        <fullName>Glycine cleavage system H protein, mitochondrial</fullName>
    </recommendedName>
</protein>
<keyword id="KW-0002">3D-structure</keyword>
<keyword id="KW-0450">Lipoyl</keyword>
<keyword id="KW-0496">Mitochondrion</keyword>
<keyword id="KW-0809">Transit peptide</keyword>
<gene>
    <name type="primary">GDCSH</name>
    <name type="synonym">GCDH</name>
</gene>
<reference key="1">
    <citation type="journal article" date="1990" name="J. Biol. Chem.">
        <title>Molecular cloning, transcriptional characterization, and sequencing of cDNA encoding the H-protein of the mitochondrial glycine decarboxylase complex in peas.</title>
        <authorList>
            <person name="Kim Y."/>
            <person name="Oliver D.J."/>
        </authorList>
    </citation>
    <scope>NUCLEOTIDE SEQUENCE [MRNA]</scope>
</reference>
<reference key="2">
    <citation type="journal article" date="1990" name="Biochem. J.">
        <title>cDNA cloning, primary structure and gene expression for H-protein, a component of the glycine-cleavage system (glycine decarboxylase) of pea (Pisum sativum) leaf mitochondria.</title>
        <authorList>
            <person name="Macherel D."/>
            <person name="Lebrun M."/>
            <person name="Gagnon J."/>
            <person name="Neuburger M."/>
            <person name="Douce R."/>
        </authorList>
    </citation>
    <scope>NUCLEOTIDE SEQUENCE [MRNA]</scope>
    <scope>LIPOYLATION AT LYS-97</scope>
    <source>
        <tissue>Leaf</tissue>
    </source>
</reference>
<reference key="3">
    <citation type="journal article" date="1992" name="Biochem. J.">
        <title>Cloning of the gene (gdcH) encoding H-protein, a component of the glycine decarboxylase complex of pea (Pisum sativum L.).</title>
        <authorList>
            <person name="Macherel D."/>
            <person name="Bourguignon J."/>
            <person name="Douce R."/>
        </authorList>
    </citation>
    <scope>NUCLEOTIDE SEQUENCE [GENOMIC DNA]</scope>
</reference>
<reference key="4">
    <citation type="journal article" date="1994" name="Proc. Natl. Acad. Sci. U.S.A.">
        <title>X-ray structure determination at 2.6-A resolution of a lipoate-containing protein: the H-protein of the glycine decarboxylase complex from pea leaves.</title>
        <authorList>
            <person name="Pares S."/>
            <person name="Cohen-Addad C."/>
            <person name="Sieker L."/>
            <person name="Neuburger M."/>
            <person name="Douce R."/>
        </authorList>
    </citation>
    <scope>X-RAY CRYSTALLOGRAPHY (2.6 ANGSTROMS) OF 35-165</scope>
</reference>